<accession>Q7A7M3</accession>
<feature type="signal peptide" evidence="1">
    <location>
        <begin position="1"/>
        <end position="17"/>
    </location>
</feature>
<feature type="chain" id="PRO_0000278315" description="Efem/EfeO family lipoprotein">
    <location>
        <begin position="18"/>
        <end position="284"/>
    </location>
</feature>
<feature type="lipid moiety-binding region" description="N-palmitoyl cysteine" evidence="1">
    <location>
        <position position="18"/>
    </location>
</feature>
<feature type="lipid moiety-binding region" description="S-diacylglycerol cysteine" evidence="1">
    <location>
        <position position="18"/>
    </location>
</feature>
<dbReference type="EMBL" id="BA000018">
    <property type="protein sequence ID" value="BAB41555.1"/>
    <property type="molecule type" value="Genomic_DNA"/>
</dbReference>
<dbReference type="PIR" id="H89799">
    <property type="entry name" value="H89799"/>
</dbReference>
<dbReference type="SMR" id="Q7A7M3"/>
<dbReference type="EnsemblBacteria" id="BAB41555">
    <property type="protein sequence ID" value="BAB41555"/>
    <property type="gene ID" value="BAB41555"/>
</dbReference>
<dbReference type="KEGG" id="sau:SA0331"/>
<dbReference type="HOGENOM" id="CLU_050342_0_1_9"/>
<dbReference type="GO" id="GO:0005886">
    <property type="term" value="C:plasma membrane"/>
    <property type="evidence" value="ECO:0007669"/>
    <property type="project" value="UniProtKB-SubCell"/>
</dbReference>
<dbReference type="CDD" id="cd14656">
    <property type="entry name" value="Imelysin-like_EfeO"/>
    <property type="match status" value="1"/>
</dbReference>
<dbReference type="Gene3D" id="1.20.1420.20">
    <property type="entry name" value="M75 peptidase, HXXE motif"/>
    <property type="match status" value="1"/>
</dbReference>
<dbReference type="InterPro" id="IPR050894">
    <property type="entry name" value="EfeM/EfeO_iron_uptake"/>
</dbReference>
<dbReference type="InterPro" id="IPR018976">
    <property type="entry name" value="Imelysin-like"/>
</dbReference>
<dbReference type="InterPro" id="IPR034981">
    <property type="entry name" value="Imelysin-like_EfeO/Algp7"/>
</dbReference>
<dbReference type="InterPro" id="IPR038352">
    <property type="entry name" value="Imelysin_sf"/>
</dbReference>
<dbReference type="InterPro" id="IPR053377">
    <property type="entry name" value="Iron_uptake_EfeM/EfeO"/>
</dbReference>
<dbReference type="NCBIfam" id="NF041757">
    <property type="entry name" value="EfeO"/>
    <property type="match status" value="1"/>
</dbReference>
<dbReference type="PANTHER" id="PTHR39192">
    <property type="entry name" value="IRON UPTAKE SYSTEM COMPONENT EFEO"/>
    <property type="match status" value="1"/>
</dbReference>
<dbReference type="PANTHER" id="PTHR39192:SF1">
    <property type="entry name" value="IRON UPTAKE SYSTEM COMPONENT EFEO"/>
    <property type="match status" value="1"/>
</dbReference>
<dbReference type="Pfam" id="PF09375">
    <property type="entry name" value="Peptidase_M75"/>
    <property type="match status" value="1"/>
</dbReference>
<dbReference type="PROSITE" id="PS51257">
    <property type="entry name" value="PROKAR_LIPOPROTEIN"/>
    <property type="match status" value="1"/>
</dbReference>
<proteinExistence type="inferred from homology"/>
<sequence length="284" mass="32247">MKKLTTLLLASTLLIAACGNDDSKKDDSKTSKKDDGVKAELKQATKAYDKYTDEQLNEFLKGTEKFVKAIENNDMAQAKALYPKVRMYYERSEPVAEAFGDLDPKIDARLADMKEEKKEKEWSGYHKIEKALYEDKKIDDVTKKDAQQLLKDAKELHAKADTLDITPKLMLQGSVDLLNEVATSKITGEEEIYSHTDLYDFKANVEGAQKIYDLFKPILEKKDKKLSDDIQMNFDKVNQLLDKYKDNNGGYESFEKVSKKDRKAFADAVNALGEPLSKMAVITE</sequence>
<keyword id="KW-1003">Cell membrane</keyword>
<keyword id="KW-0449">Lipoprotein</keyword>
<keyword id="KW-0472">Membrane</keyword>
<keyword id="KW-0564">Palmitate</keyword>
<keyword id="KW-0732">Signal</keyword>
<reference key="1">
    <citation type="journal article" date="2001" name="Lancet">
        <title>Whole genome sequencing of meticillin-resistant Staphylococcus aureus.</title>
        <authorList>
            <person name="Kuroda M."/>
            <person name="Ohta T."/>
            <person name="Uchiyama I."/>
            <person name="Baba T."/>
            <person name="Yuzawa H."/>
            <person name="Kobayashi I."/>
            <person name="Cui L."/>
            <person name="Oguchi A."/>
            <person name="Aoki K."/>
            <person name="Nagai Y."/>
            <person name="Lian J.-Q."/>
            <person name="Ito T."/>
            <person name="Kanamori M."/>
            <person name="Matsumaru H."/>
            <person name="Maruyama A."/>
            <person name="Murakami H."/>
            <person name="Hosoyama A."/>
            <person name="Mizutani-Ui Y."/>
            <person name="Takahashi N.K."/>
            <person name="Sawano T."/>
            <person name="Inoue R."/>
            <person name="Kaito C."/>
            <person name="Sekimizu K."/>
            <person name="Hirakawa H."/>
            <person name="Kuhara S."/>
            <person name="Goto S."/>
            <person name="Yabuzaki J."/>
            <person name="Kanehisa M."/>
            <person name="Yamashita A."/>
            <person name="Oshima K."/>
            <person name="Furuya K."/>
            <person name="Yoshino C."/>
            <person name="Shiba T."/>
            <person name="Hattori M."/>
            <person name="Ogasawara N."/>
            <person name="Hayashi H."/>
            <person name="Hiramatsu K."/>
        </authorList>
    </citation>
    <scope>NUCLEOTIDE SEQUENCE [LARGE SCALE GENOMIC DNA]</scope>
    <source>
        <strain>N315</strain>
    </source>
</reference>
<gene>
    <name type="ordered locus">SA0331</name>
</gene>
<organism>
    <name type="scientific">Staphylococcus aureus (strain N315)</name>
    <dbReference type="NCBI Taxonomy" id="158879"/>
    <lineage>
        <taxon>Bacteria</taxon>
        <taxon>Bacillati</taxon>
        <taxon>Bacillota</taxon>
        <taxon>Bacilli</taxon>
        <taxon>Bacillales</taxon>
        <taxon>Staphylococcaceae</taxon>
        <taxon>Staphylococcus</taxon>
    </lineage>
</organism>
<protein>
    <recommendedName>
        <fullName>Efem/EfeO family lipoprotein</fullName>
    </recommendedName>
</protein>
<comment type="subcellular location">
    <subcellularLocation>
        <location evidence="1">Cell membrane</location>
        <topology evidence="1">Lipid-anchor</topology>
    </subcellularLocation>
</comment>
<comment type="similarity">
    <text evidence="2">Belongs to the EfeM/EfeO family.</text>
</comment>
<name>EFEMO_STAAN</name>
<evidence type="ECO:0000255" key="1">
    <source>
        <dbReference type="PROSITE-ProRule" id="PRU00303"/>
    </source>
</evidence>
<evidence type="ECO:0000305" key="2"/>